<organism>
    <name type="scientific">Mus musculus</name>
    <name type="common">Mouse</name>
    <dbReference type="NCBI Taxonomy" id="10090"/>
    <lineage>
        <taxon>Eukaryota</taxon>
        <taxon>Metazoa</taxon>
        <taxon>Chordata</taxon>
        <taxon>Craniata</taxon>
        <taxon>Vertebrata</taxon>
        <taxon>Euteleostomi</taxon>
        <taxon>Mammalia</taxon>
        <taxon>Eutheria</taxon>
        <taxon>Euarchontoglires</taxon>
        <taxon>Glires</taxon>
        <taxon>Rodentia</taxon>
        <taxon>Myomorpha</taxon>
        <taxon>Muroidea</taxon>
        <taxon>Muridae</taxon>
        <taxon>Murinae</taxon>
        <taxon>Mus</taxon>
        <taxon>Mus</taxon>
    </lineage>
</organism>
<keyword id="KW-0002">3D-structure</keyword>
<keyword id="KW-0007">Acetylation</keyword>
<keyword id="KW-0378">Hydrolase</keyword>
<keyword id="KW-0479">Metal-binding</keyword>
<keyword id="KW-0482">Metalloprotease</keyword>
<keyword id="KW-0597">Phosphoprotein</keyword>
<keyword id="KW-0645">Protease</keyword>
<keyword id="KW-1185">Reference proteome</keyword>
<keyword id="KW-0862">Zinc</keyword>
<name>MPND_MOUSE</name>
<dbReference type="EC" id="3.4.-.-" evidence="1"/>
<dbReference type="EMBL" id="AK146973">
    <property type="protein sequence ID" value="BAE27578.1"/>
    <property type="status" value="ALT_INIT"/>
    <property type="molecule type" value="mRNA"/>
</dbReference>
<dbReference type="EMBL" id="AK160356">
    <property type="protein sequence ID" value="BAE35755.1"/>
    <property type="status" value="ALT_FRAME"/>
    <property type="molecule type" value="mRNA"/>
</dbReference>
<dbReference type="EMBL" id="AK172381">
    <property type="protein sequence ID" value="BAE42975.1"/>
    <property type="molecule type" value="mRNA"/>
</dbReference>
<dbReference type="EMBL" id="BC017625">
    <property type="protein sequence ID" value="AAH17625.2"/>
    <property type="molecule type" value="mRNA"/>
</dbReference>
<dbReference type="CCDS" id="CCDS50150.1"/>
<dbReference type="RefSeq" id="NP_080806.4">
    <property type="nucleotide sequence ID" value="NM_026530.5"/>
</dbReference>
<dbReference type="PDB" id="7YDT">
    <property type="method" value="X-ray"/>
    <property type="resolution" value="2.06 A"/>
    <property type="chains" value="A/B=2-160"/>
</dbReference>
<dbReference type="PDB" id="7YDW">
    <property type="method" value="X-ray"/>
    <property type="resolution" value="2.47 A"/>
    <property type="chains" value="A/B/C/D=2-160"/>
</dbReference>
<dbReference type="PDBsum" id="7YDT"/>
<dbReference type="PDBsum" id="7YDW"/>
<dbReference type="SMR" id="Q3TV65"/>
<dbReference type="BioGRID" id="212626">
    <property type="interactions" value="1"/>
</dbReference>
<dbReference type="FunCoup" id="Q3TV65">
    <property type="interactions" value="414"/>
</dbReference>
<dbReference type="STRING" id="10090.ENSMUSP00000119745"/>
<dbReference type="iPTMnet" id="Q3TV65"/>
<dbReference type="PhosphoSitePlus" id="Q3TV65"/>
<dbReference type="SwissPalm" id="Q3TV65"/>
<dbReference type="jPOST" id="Q3TV65"/>
<dbReference type="PaxDb" id="10090-ENSMUSP00000119745"/>
<dbReference type="ProteomicsDB" id="291396"/>
<dbReference type="Pumba" id="Q3TV65"/>
<dbReference type="Antibodypedia" id="23593">
    <property type="antibodies" value="142 antibodies from 20 providers"/>
</dbReference>
<dbReference type="Ensembl" id="ENSMUST00000149441.8">
    <property type="protein sequence ID" value="ENSMUSP00000119745.2"/>
    <property type="gene ID" value="ENSMUSG00000003199.17"/>
</dbReference>
<dbReference type="GeneID" id="68047"/>
<dbReference type="KEGG" id="mmu:68047"/>
<dbReference type="UCSC" id="uc008dap.1">
    <property type="organism name" value="mouse"/>
</dbReference>
<dbReference type="AGR" id="MGI:1915297"/>
<dbReference type="CTD" id="84954"/>
<dbReference type="MGI" id="MGI:1915297">
    <property type="gene designation" value="Mpnd"/>
</dbReference>
<dbReference type="VEuPathDB" id="HostDB:ENSMUSG00000003199"/>
<dbReference type="eggNOG" id="KOG1555">
    <property type="taxonomic scope" value="Eukaryota"/>
</dbReference>
<dbReference type="GeneTree" id="ENSGT00940000160191"/>
<dbReference type="HOGENOM" id="CLU_037792_0_0_1"/>
<dbReference type="InParanoid" id="Q3TV65"/>
<dbReference type="OMA" id="VEMVYVQ"/>
<dbReference type="OrthoDB" id="167806at2759"/>
<dbReference type="PhylomeDB" id="Q3TV65"/>
<dbReference type="TreeFam" id="TF324811"/>
<dbReference type="BioGRID-ORCS" id="68047">
    <property type="hits" value="5 hits in 78 CRISPR screens"/>
</dbReference>
<dbReference type="ChiTaRS" id="Mpnd">
    <property type="organism name" value="mouse"/>
</dbReference>
<dbReference type="PRO" id="PR:Q3TV65"/>
<dbReference type="Proteomes" id="UP000000589">
    <property type="component" value="Chromosome 17"/>
</dbReference>
<dbReference type="RNAct" id="Q3TV65">
    <property type="molecule type" value="protein"/>
</dbReference>
<dbReference type="Bgee" id="ENSMUSG00000003199">
    <property type="expression patterns" value="Expressed in dorsal pancreas and 255 other cell types or tissues"/>
</dbReference>
<dbReference type="ExpressionAtlas" id="Q3TV65">
    <property type="expression patterns" value="baseline and differential"/>
</dbReference>
<dbReference type="GO" id="GO:0046872">
    <property type="term" value="F:metal ion binding"/>
    <property type="evidence" value="ECO:0007669"/>
    <property type="project" value="UniProtKB-KW"/>
</dbReference>
<dbReference type="GO" id="GO:0008237">
    <property type="term" value="F:metallopeptidase activity"/>
    <property type="evidence" value="ECO:0007669"/>
    <property type="project" value="UniProtKB-KW"/>
</dbReference>
<dbReference type="GO" id="GO:0006508">
    <property type="term" value="P:proteolysis"/>
    <property type="evidence" value="ECO:0007669"/>
    <property type="project" value="UniProtKB-KW"/>
</dbReference>
<dbReference type="CDD" id="cd08067">
    <property type="entry name" value="MPN_2A_DUB"/>
    <property type="match status" value="1"/>
</dbReference>
<dbReference type="FunFam" id="3.40.140.10:FF:000053">
    <property type="entry name" value="MPN domain-containing protein CG4751"/>
    <property type="match status" value="1"/>
</dbReference>
<dbReference type="Gene3D" id="3.40.140.10">
    <property type="entry name" value="Cytidine Deaminase, domain 2"/>
    <property type="match status" value="1"/>
</dbReference>
<dbReference type="InterPro" id="IPR000555">
    <property type="entry name" value="JAMM/MPN+_dom"/>
</dbReference>
<dbReference type="InterPro" id="IPR050242">
    <property type="entry name" value="JAMM_MPN+_peptidase_M67A"/>
</dbReference>
<dbReference type="InterPro" id="IPR037518">
    <property type="entry name" value="MPN"/>
</dbReference>
<dbReference type="InterPro" id="IPR040843">
    <property type="entry name" value="RAMA"/>
</dbReference>
<dbReference type="PANTHER" id="PTHR10410">
    <property type="entry name" value="EUKARYOTIC TRANSLATION INITIATION FACTOR 3 -RELATED"/>
    <property type="match status" value="1"/>
</dbReference>
<dbReference type="Pfam" id="PF01398">
    <property type="entry name" value="JAB"/>
    <property type="match status" value="1"/>
</dbReference>
<dbReference type="Pfam" id="PF18755">
    <property type="entry name" value="RAMA"/>
    <property type="match status" value="1"/>
</dbReference>
<dbReference type="SUPFAM" id="SSF102712">
    <property type="entry name" value="JAB1/MPN domain"/>
    <property type="match status" value="1"/>
</dbReference>
<dbReference type="PROSITE" id="PS50249">
    <property type="entry name" value="MPN"/>
    <property type="match status" value="1"/>
</dbReference>
<proteinExistence type="evidence at protein level"/>
<reference key="1">
    <citation type="journal article" date="2005" name="Science">
        <title>The transcriptional landscape of the mammalian genome.</title>
        <authorList>
            <person name="Carninci P."/>
            <person name="Kasukawa T."/>
            <person name="Katayama S."/>
            <person name="Gough J."/>
            <person name="Frith M.C."/>
            <person name="Maeda N."/>
            <person name="Oyama R."/>
            <person name="Ravasi T."/>
            <person name="Lenhard B."/>
            <person name="Wells C."/>
            <person name="Kodzius R."/>
            <person name="Shimokawa K."/>
            <person name="Bajic V.B."/>
            <person name="Brenner S.E."/>
            <person name="Batalov S."/>
            <person name="Forrest A.R."/>
            <person name="Zavolan M."/>
            <person name="Davis M.J."/>
            <person name="Wilming L.G."/>
            <person name="Aidinis V."/>
            <person name="Allen J.E."/>
            <person name="Ambesi-Impiombato A."/>
            <person name="Apweiler R."/>
            <person name="Aturaliya R.N."/>
            <person name="Bailey T.L."/>
            <person name="Bansal M."/>
            <person name="Baxter L."/>
            <person name="Beisel K.W."/>
            <person name="Bersano T."/>
            <person name="Bono H."/>
            <person name="Chalk A.M."/>
            <person name="Chiu K.P."/>
            <person name="Choudhary V."/>
            <person name="Christoffels A."/>
            <person name="Clutterbuck D.R."/>
            <person name="Crowe M.L."/>
            <person name="Dalla E."/>
            <person name="Dalrymple B.P."/>
            <person name="de Bono B."/>
            <person name="Della Gatta G."/>
            <person name="di Bernardo D."/>
            <person name="Down T."/>
            <person name="Engstrom P."/>
            <person name="Fagiolini M."/>
            <person name="Faulkner G."/>
            <person name="Fletcher C.F."/>
            <person name="Fukushima T."/>
            <person name="Furuno M."/>
            <person name="Futaki S."/>
            <person name="Gariboldi M."/>
            <person name="Georgii-Hemming P."/>
            <person name="Gingeras T.R."/>
            <person name="Gojobori T."/>
            <person name="Green R.E."/>
            <person name="Gustincich S."/>
            <person name="Harbers M."/>
            <person name="Hayashi Y."/>
            <person name="Hensch T.K."/>
            <person name="Hirokawa N."/>
            <person name="Hill D."/>
            <person name="Huminiecki L."/>
            <person name="Iacono M."/>
            <person name="Ikeo K."/>
            <person name="Iwama A."/>
            <person name="Ishikawa T."/>
            <person name="Jakt M."/>
            <person name="Kanapin A."/>
            <person name="Katoh M."/>
            <person name="Kawasawa Y."/>
            <person name="Kelso J."/>
            <person name="Kitamura H."/>
            <person name="Kitano H."/>
            <person name="Kollias G."/>
            <person name="Krishnan S.P."/>
            <person name="Kruger A."/>
            <person name="Kummerfeld S.K."/>
            <person name="Kurochkin I.V."/>
            <person name="Lareau L.F."/>
            <person name="Lazarevic D."/>
            <person name="Lipovich L."/>
            <person name="Liu J."/>
            <person name="Liuni S."/>
            <person name="McWilliam S."/>
            <person name="Madan Babu M."/>
            <person name="Madera M."/>
            <person name="Marchionni L."/>
            <person name="Matsuda H."/>
            <person name="Matsuzawa S."/>
            <person name="Miki H."/>
            <person name="Mignone F."/>
            <person name="Miyake S."/>
            <person name="Morris K."/>
            <person name="Mottagui-Tabar S."/>
            <person name="Mulder N."/>
            <person name="Nakano N."/>
            <person name="Nakauchi H."/>
            <person name="Ng P."/>
            <person name="Nilsson R."/>
            <person name="Nishiguchi S."/>
            <person name="Nishikawa S."/>
            <person name="Nori F."/>
            <person name="Ohara O."/>
            <person name="Okazaki Y."/>
            <person name="Orlando V."/>
            <person name="Pang K.C."/>
            <person name="Pavan W.J."/>
            <person name="Pavesi G."/>
            <person name="Pesole G."/>
            <person name="Petrovsky N."/>
            <person name="Piazza S."/>
            <person name="Reed J."/>
            <person name="Reid J.F."/>
            <person name="Ring B.Z."/>
            <person name="Ringwald M."/>
            <person name="Rost B."/>
            <person name="Ruan Y."/>
            <person name="Salzberg S.L."/>
            <person name="Sandelin A."/>
            <person name="Schneider C."/>
            <person name="Schoenbach C."/>
            <person name="Sekiguchi K."/>
            <person name="Semple C.A."/>
            <person name="Seno S."/>
            <person name="Sessa L."/>
            <person name="Sheng Y."/>
            <person name="Shibata Y."/>
            <person name="Shimada H."/>
            <person name="Shimada K."/>
            <person name="Silva D."/>
            <person name="Sinclair B."/>
            <person name="Sperling S."/>
            <person name="Stupka E."/>
            <person name="Sugiura K."/>
            <person name="Sultana R."/>
            <person name="Takenaka Y."/>
            <person name="Taki K."/>
            <person name="Tammoja K."/>
            <person name="Tan S.L."/>
            <person name="Tang S."/>
            <person name="Taylor M.S."/>
            <person name="Tegner J."/>
            <person name="Teichmann S.A."/>
            <person name="Ueda H.R."/>
            <person name="van Nimwegen E."/>
            <person name="Verardo R."/>
            <person name="Wei C.L."/>
            <person name="Yagi K."/>
            <person name="Yamanishi H."/>
            <person name="Zabarovsky E."/>
            <person name="Zhu S."/>
            <person name="Zimmer A."/>
            <person name="Hide W."/>
            <person name="Bult C."/>
            <person name="Grimmond S.M."/>
            <person name="Teasdale R.D."/>
            <person name="Liu E.T."/>
            <person name="Brusic V."/>
            <person name="Quackenbush J."/>
            <person name="Wahlestedt C."/>
            <person name="Mattick J.S."/>
            <person name="Hume D.A."/>
            <person name="Kai C."/>
            <person name="Sasaki D."/>
            <person name="Tomaru Y."/>
            <person name="Fukuda S."/>
            <person name="Kanamori-Katayama M."/>
            <person name="Suzuki M."/>
            <person name="Aoki J."/>
            <person name="Arakawa T."/>
            <person name="Iida J."/>
            <person name="Imamura K."/>
            <person name="Itoh M."/>
            <person name="Kato T."/>
            <person name="Kawaji H."/>
            <person name="Kawagashira N."/>
            <person name="Kawashima T."/>
            <person name="Kojima M."/>
            <person name="Kondo S."/>
            <person name="Konno H."/>
            <person name="Nakano K."/>
            <person name="Ninomiya N."/>
            <person name="Nishio T."/>
            <person name="Okada M."/>
            <person name="Plessy C."/>
            <person name="Shibata K."/>
            <person name="Shiraki T."/>
            <person name="Suzuki S."/>
            <person name="Tagami M."/>
            <person name="Waki K."/>
            <person name="Watahiki A."/>
            <person name="Okamura-Oho Y."/>
            <person name="Suzuki H."/>
            <person name="Kawai J."/>
            <person name="Hayashizaki Y."/>
        </authorList>
    </citation>
    <scope>NUCLEOTIDE SEQUENCE [LARGE SCALE MRNA]</scope>
    <source>
        <strain>C57BL/6J</strain>
        <strain>NOD</strain>
        <tissue>Eye</tissue>
        <tissue>Heart</tissue>
        <tissue>Spleen</tissue>
    </source>
</reference>
<reference key="2">
    <citation type="journal article" date="2004" name="Genome Res.">
        <title>The status, quality, and expansion of the NIH full-length cDNA project: the Mammalian Gene Collection (MGC).</title>
        <authorList>
            <consortium name="The MGC Project Team"/>
        </authorList>
    </citation>
    <scope>NUCLEOTIDE SEQUENCE [LARGE SCALE MRNA] OF 2-487</scope>
    <source>
        <strain>FVB/N</strain>
        <tissue>Mammary gland</tissue>
    </source>
</reference>
<reference evidence="9 10" key="3">
    <citation type="journal article" date="2023" name="Int. J. Mol. Sci.">
        <title>Structures of MPND Reveal the Molecular Recognition of Nucleosomes.</title>
        <authorList>
            <person name="Yang M."/>
            <person name="Li X."/>
            <person name="Tian Z."/>
            <person name="Ma L."/>
            <person name="Ma J."/>
            <person name="Liu Y."/>
            <person name="Shang G."/>
            <person name="Liang A."/>
            <person name="Wu W."/>
            <person name="Chen Z."/>
        </authorList>
    </citation>
    <scope>X-RAY CRYSTALLOGRAPHY (2.06 ANGSTROMS) OF 2-160 IN COMPLEX WITH DNA</scope>
    <scope>INTERACTION WITH HISTONES</scope>
    <scope>FUNCTION</scope>
    <scope>DOMAIN</scope>
    <scope>SUBUNIT</scope>
    <scope>MUTAGENESIS OF SER-113; SER-115 AND TRP-135</scope>
</reference>
<accession>Q3TV65</accession>
<accession>Q3T9P5</accession>
<accession>Q3UIC8</accession>
<accession>Q8VEN1</accession>
<evidence type="ECO:0000250" key="1">
    <source>
        <dbReference type="UniProtKB" id="Q5VVJ2"/>
    </source>
</evidence>
<evidence type="ECO:0000250" key="2">
    <source>
        <dbReference type="UniProtKB" id="Q8N594"/>
    </source>
</evidence>
<evidence type="ECO:0000255" key="3"/>
<evidence type="ECO:0000255" key="4">
    <source>
        <dbReference type="PROSITE-ProRule" id="PRU01182"/>
    </source>
</evidence>
<evidence type="ECO:0000256" key="5">
    <source>
        <dbReference type="SAM" id="MobiDB-lite"/>
    </source>
</evidence>
<evidence type="ECO:0000269" key="6">
    <source>
    </source>
</evidence>
<evidence type="ECO:0000305" key="7"/>
<evidence type="ECO:0000312" key="8">
    <source>
        <dbReference type="MGI" id="MGI:1915297"/>
    </source>
</evidence>
<evidence type="ECO:0007744" key="9">
    <source>
        <dbReference type="PDB" id="7YDT"/>
    </source>
</evidence>
<evidence type="ECO:0007744" key="10">
    <source>
        <dbReference type="PDB" id="7YDW"/>
    </source>
</evidence>
<evidence type="ECO:0007829" key="11">
    <source>
        <dbReference type="PDB" id="7YDT"/>
    </source>
</evidence>
<protein>
    <recommendedName>
        <fullName evidence="7">MPN domain-containing protein</fullName>
        <ecNumber evidence="1">3.4.-.-</ecNumber>
    </recommendedName>
</protein>
<feature type="initiator methionine" description="Removed" evidence="2">
    <location>
        <position position="1"/>
    </location>
</feature>
<feature type="chain" id="PRO_0000278805" description="MPN domain-containing protein">
    <location>
        <begin position="2"/>
        <end position="487"/>
    </location>
</feature>
<feature type="domain" description="RAMA" evidence="3">
    <location>
        <begin position="61"/>
        <end position="156"/>
    </location>
</feature>
<feature type="domain" description="MPN" evidence="4">
    <location>
        <begin position="258"/>
        <end position="393"/>
    </location>
</feature>
<feature type="region of interest" description="Disordered" evidence="5">
    <location>
        <begin position="1"/>
        <end position="55"/>
    </location>
</feature>
<feature type="region of interest" description="Disordered" evidence="5">
    <location>
        <begin position="163"/>
        <end position="217"/>
    </location>
</feature>
<feature type="short sequence motif" description="JAMM motif" evidence="4">
    <location>
        <begin position="335"/>
        <end position="348"/>
    </location>
</feature>
<feature type="compositionally biased region" description="Acidic residues" evidence="5">
    <location>
        <begin position="15"/>
        <end position="28"/>
    </location>
</feature>
<feature type="compositionally biased region" description="Gly residues" evidence="5">
    <location>
        <begin position="33"/>
        <end position="55"/>
    </location>
</feature>
<feature type="compositionally biased region" description="Acidic residues" evidence="5">
    <location>
        <begin position="172"/>
        <end position="187"/>
    </location>
</feature>
<feature type="binding site" evidence="6 10">
    <location>
        <position position="113"/>
    </location>
    <ligand>
        <name>DNA</name>
        <dbReference type="ChEBI" id="CHEBI:16991"/>
        <note>ligand shared between one subunit of each homodimer constituting the homotetramer</note>
    </ligand>
</feature>
<feature type="binding site" evidence="6 10">
    <location>
        <position position="115"/>
    </location>
    <ligand>
        <name>DNA</name>
        <dbReference type="ChEBI" id="CHEBI:16991"/>
        <note>ligand shared between one subunit of each homodimer constituting the homotetramer</note>
    </ligand>
</feature>
<feature type="binding site" evidence="6 10">
    <location>
        <position position="135"/>
    </location>
    <ligand>
        <name>DNA</name>
        <dbReference type="ChEBI" id="CHEBI:16991"/>
        <note>ligand shared between one subunit of each homodimer constituting the homotetramer</note>
    </ligand>
</feature>
<feature type="binding site" evidence="4">
    <location>
        <position position="335"/>
    </location>
    <ligand>
        <name>Zn(2+)</name>
        <dbReference type="ChEBI" id="CHEBI:29105"/>
        <note>catalytic</note>
    </ligand>
</feature>
<feature type="binding site" evidence="4">
    <location>
        <position position="337"/>
    </location>
    <ligand>
        <name>Zn(2+)</name>
        <dbReference type="ChEBI" id="CHEBI:29105"/>
        <note>catalytic</note>
    </ligand>
</feature>
<feature type="binding site" evidence="4">
    <location>
        <position position="348"/>
    </location>
    <ligand>
        <name>Zn(2+)</name>
        <dbReference type="ChEBI" id="CHEBI:29105"/>
        <note>catalytic</note>
    </ligand>
</feature>
<feature type="modified residue" description="N-acetylalanine" evidence="2">
    <location>
        <position position="2"/>
    </location>
</feature>
<feature type="modified residue" description="Phosphoserine" evidence="2">
    <location>
        <position position="8"/>
    </location>
</feature>
<feature type="modified residue" description="Phosphoserine" evidence="2">
    <location>
        <position position="168"/>
    </location>
</feature>
<feature type="modified residue" description="Phosphoserine" evidence="2">
    <location>
        <position position="171"/>
    </location>
</feature>
<feature type="mutagenesis site" description="Lost DNA binding." evidence="6">
    <original>S</original>
    <variation>A</variation>
    <location>
        <position position="113"/>
    </location>
</feature>
<feature type="mutagenesis site" description="Lost DNA binding." evidence="6">
    <original>S</original>
    <variation>A</variation>
    <location>
        <position position="115"/>
    </location>
</feature>
<feature type="mutagenesis site" description="Lost DNA binding." evidence="6">
    <original>W</original>
    <variation>A</variation>
    <location>
        <position position="135"/>
    </location>
</feature>
<feature type="sequence conflict" description="In Ref. 1; BAE27578." evidence="7" ref="1">
    <original>M</original>
    <variation>I</variation>
    <location>
        <position position="228"/>
    </location>
</feature>
<feature type="helix" evidence="11">
    <location>
        <begin position="67"/>
        <end position="72"/>
    </location>
</feature>
<feature type="strand" evidence="11">
    <location>
        <begin position="79"/>
        <end position="87"/>
    </location>
</feature>
<feature type="strand" evidence="11">
    <location>
        <begin position="90"/>
        <end position="96"/>
    </location>
</feature>
<feature type="strand" evidence="11">
    <location>
        <begin position="102"/>
        <end position="104"/>
    </location>
</feature>
<feature type="turn" evidence="11">
    <location>
        <begin position="105"/>
        <end position="107"/>
    </location>
</feature>
<feature type="strand" evidence="11">
    <location>
        <begin position="109"/>
        <end position="113"/>
    </location>
</feature>
<feature type="helix" evidence="11">
    <location>
        <begin position="114"/>
        <end position="125"/>
    </location>
</feature>
<feature type="turn" evidence="11">
    <location>
        <begin position="135"/>
        <end position="137"/>
    </location>
</feature>
<feature type="helix" evidence="11">
    <location>
        <begin position="146"/>
        <end position="155"/>
    </location>
</feature>
<sequence length="487" mass="53376">MAAPESLSPGATAEEAPEEDEDDAEAEDPERGTGSGGRSGSLGGSGGGTAGPGMALGGALTRRAVTLRVLLKDELLEPGEGVLSIYYLGRKFTGDLQLDGRIVWQETGQVFNSPSAWATHCKKLVNPAKKSGCGWASVKYKGQKLDKYKAAWLRRHQLHMPVATADESPTSEGEEEELLLEEEEEDVLAGVSSEDKGHRPPGKGSLEPEATPPGKRMDKVPVPIRYCMLGSRDSARNPHTLVEVTSFAAINKFQPFNVAVSSNVLFLLDFHCHLTRSEVVGYLGGRWDINNQMLTVLRAFPCRSRLGDTDTAATVEEEIYQVLFLRGLSLVGWYHSHPHSPAVPSLQDIDAQMEYQLRLQGSSNGFQPCLALLCSPYYSGNPGPESKICPFWVMPPPEQRPSDYGIPMDVEMAYVQDSFLTNDVLQEMVMLAEFYKGAPDLVKFQEAWSPEHTYLDKLKMSLASRTPKDQGMCHVLEQVCSVLKQGS</sequence>
<gene>
    <name evidence="8" type="primary">Mpnd</name>
</gene>
<comment type="function">
    <text evidence="1 2 6">Probable protease (By similarity). Acts as a sensor of N(6)-methyladenosine methylation on DNA (m6A): recognizes and binds m6A DNA, leading to its degradation (By similarity). Binds only double strand DNA (dsDNA) in a sequence-independent manner (PubMed:36834777).</text>
</comment>
<comment type="subunit">
    <text evidence="6">Monomer (PubMed:36834777). Mainly monomoric, but when binds to dsDNA, forms homotetramer assembled into two homodimers (PubMed:36834777). May interact with histones; this interaction is facilitated by (PubMed:36834777).</text>
</comment>
<comment type="domain">
    <text evidence="2 6">The RAMA domain recognizes and binds N(6)-methyladenosine methylation on DNA (m6A) (By similarity). The RAMA domain mediates interaction with histones (PubMed:36834777).</text>
</comment>
<comment type="domain">
    <text evidence="6">The two acidic regions inhibit DNA binding (PubMed:36834777). The two acidic regions promotes histone interaction (PubMed:36834777).</text>
</comment>
<comment type="PTM">
    <text evidence="2">Degraded following binding to N(6)-methyladenosine methylated DNA (m6A).</text>
</comment>
<comment type="similarity">
    <text evidence="7">Belongs to the peptidase M67 family.</text>
</comment>
<comment type="sequence caution" evidence="7">
    <conflict type="erroneous initiation">
        <sequence resource="EMBL-CDS" id="BAE27578"/>
    </conflict>
    <text>Truncated N-terminus.</text>
</comment>
<comment type="sequence caution" evidence="7">
    <conflict type="frameshift">
        <sequence resource="EMBL-CDS" id="BAE35755"/>
    </conflict>
</comment>